<comment type="function">
    <text evidence="2">E3 ubiquitin-protein ligase that mediates monoubiquitination of 'Lys-119' of histone H2A (H2AK119Ub), thereby playing a central role in histone code and gene regulation. H2AK119Ub gives a specific tag for epigenetic transcriptional repression and participates in X chromosome inactivation of female mammals. May be involved in the initiation of both imprinted and random X inactivation. Essential component of a Polycomb group (PcG) multiprotein PRC1-like complex, a complex class required to maintain the transcriptionally repressive state of many genes, including Hox genes, throughout development. PcG PRC1 complex acts via chromatin remodeling and modification of histones, rendering chromatin heritably changed in its expressibility. E3 ubiquitin-protein ligase activity is enhanced by BMI1/PCGF4. Acts as the main E3 ubiquitin ligase on histone H2A of the PRC1 complex, while RING1 may rather act as a modulator of RNF2/RING2 activity. Plays a role in the transcriptional repression of genes that are required for pluripotency in embryonic stem cells, thereby contributing to differentiation of the ectodermal and endodermal germ layers. Association with the chromosomal DNA is cell-cycle dependent. In resting B- and T-lymphocytes, interaction with AURKB leads to block its activity, thereby maintaining transcription in resting lymphocytes. Also acts as a negative regulator of autophagy by mediating ubiquitination of AMBRA1, leading to its subsequent degradation.</text>
</comment>
<comment type="catalytic activity">
    <reaction evidence="1">
        <text>S-ubiquitinyl-[E2 ubiquitin-conjugating enzyme]-L-cysteine + [acceptor protein]-L-lysine = [E2 ubiquitin-conjugating enzyme]-L-cysteine + N(6)-ubiquitinyl-[acceptor protein]-L-lysine.</text>
        <dbReference type="EC" id="2.3.2.27"/>
    </reaction>
</comment>
<comment type="pathway">
    <text evidence="1">Protein modification; protein ubiquitination.</text>
</comment>
<comment type="subunit">
    <text evidence="1 2">Component of chromatin-associated Polycomb (PcG) complexes. Component of a number of PRC1-like complexes; these complexes contain either the polycomb group ring finger protein PCGF1, or PCGF2, or PCGF3, or BMI1, or PCGF5, or PCGF6. Distinct PRC1-like complexes are composed of a RING1 subunit (RING1B or RING1A), one of the six PCGF proteins (PCGF1, PCGF2, PCGF3, BMI1, PCGF5 or PCGF6), one PHC protein (PHC1, PHC2 or PHC3) and one of the CBX proteins (CBX2, CBX4, CBX6, CBX7 or CBX8) (By similarity). Part of a complex that contains RNF2, UB2D3 and BMI1; within that complex RNF2 and BMI1 form a tight heterodimer, where UB2D3 interacts only with RNF2. The complex composed of RNF2, UB2D3 and BMI1 binds nucleosomes, and has activity only with nucleosomal histone H2A (By similarity). Part of a complex that contains PCGF5, RNF2 and UBE2D3. Part of a complex that contains AUTS2, PCGF5, RNF2, CSNK2B and RYBP (By similarity). Interacts with CBX6 and CBX8 (By similarity). Interacts with PHC1, PCGF2, RYBP, CBX7, CBX4, CBX2, RNF1/RING1, BMI1 and PHC2. Interaction with RYBP and CBX7 is mutually exclusive; both compete for the same binding site on RNF2 (By similarity). Component of repressive BCOR complex containing a Polycomb group subcomplex at least composed of RYBP, PCGF1, BCOR and RING1 (By similarity). Interacts with CBX2 and PHC1. Interacts with CHTOP. Interacts with AURKB (By similarity). Part of the E2F6.com-1 complex in G0 phase composed of E2F6, MGA, MAX, TFDP1, CBX3, BAT8, EUHMTASE1, RNF1/RING1, RNF2/RING2, MBLR, L3MBTL2 and YAF2 (By similarity). Component of some MLL1/MLL complex, at least composed of the core components KMT2A/MLL1, ASH2L, HCFC1/HCF1, WDR5 and RBBP5, as well as the facultative components BACC1, CHD8, E2F6, HSP70, INO80C, KANSL1, LAS1L, MAX, MCRS1, MGA, MYST1/MOF, PELP1, PHF20, PRP31, RING2, RUVB1/TIP49A, RUVB2/TIP49B, SENP3, TAF1, TAF4, TAF6, TAF7, TAF9 and TEX10. Interacts with RYBP, HIP2 and TFCP2 (By similarity). Interacts with NUPR1 (By similarity). Interacts with SAMD7 in a PHC2-dependent manner (By similarity).</text>
</comment>
<comment type="subcellular location">
    <subcellularLocation>
        <location evidence="2">Nucleus</location>
    </subcellularLocation>
    <subcellularLocation>
        <location evidence="2">Cytoplasm</location>
    </subcellularLocation>
    <subcellularLocation>
        <location evidence="2">Chromosome</location>
    </subcellularLocation>
    <text evidence="2">Enriched on inactive X chromosome (Xi) in female trophoblast stem (TS) cells as well as differentiating embryonic stem (ES) cells. The enrichment on Xi is transient during TS and ES cell differentiation. The association with Xi is mitotically stable in non-differentiated TS cells. Co-localizes with SAMD7 in nuclear polycomb bodies.</text>
</comment>
<comment type="PTM">
    <text evidence="1 2">Monoubiquitinated, by auto-ubiquitination (By similarity). Polyubiquitinated in the presence of UBE2D3 (in vitro) (By similarity).</text>
</comment>
<gene>
    <name type="primary">Rnf2</name>
    <name type="synonym">Ring1b</name>
</gene>
<accession>Q4KLY4</accession>
<proteinExistence type="evidence at transcript level"/>
<dbReference type="EC" id="2.3.2.27" evidence="1"/>
<dbReference type="EMBL" id="BC098941">
    <property type="protein sequence ID" value="AAH98941.1"/>
    <property type="molecule type" value="mRNA"/>
</dbReference>
<dbReference type="RefSeq" id="NP_001020838.1">
    <property type="nucleotide sequence ID" value="NM_001025667.1"/>
</dbReference>
<dbReference type="BMRB" id="Q4KLY4"/>
<dbReference type="SMR" id="Q4KLY4"/>
<dbReference type="BioGRID" id="257999">
    <property type="interactions" value="1"/>
</dbReference>
<dbReference type="FunCoup" id="Q4KLY4">
    <property type="interactions" value="3245"/>
</dbReference>
<dbReference type="IntAct" id="Q4KLY4">
    <property type="interactions" value="2"/>
</dbReference>
<dbReference type="STRING" id="10116.ENSRNOP00000068794"/>
<dbReference type="iPTMnet" id="Q4KLY4"/>
<dbReference type="PhosphoSitePlus" id="Q4KLY4"/>
<dbReference type="jPOST" id="Q4KLY4"/>
<dbReference type="PaxDb" id="10116-ENSRNOP00000061975"/>
<dbReference type="Ensembl" id="ENSRNOT00000065944.3">
    <property type="protein sequence ID" value="ENSRNOP00000061975.1"/>
    <property type="gene ID" value="ENSRNOG00000002454.8"/>
</dbReference>
<dbReference type="UCSC" id="RGD:1305491">
    <property type="organism name" value="rat"/>
</dbReference>
<dbReference type="AGR" id="RGD:1305491"/>
<dbReference type="RGD" id="1305491">
    <property type="gene designation" value="Rnf2"/>
</dbReference>
<dbReference type="eggNOG" id="KOG0311">
    <property type="taxonomic scope" value="Eukaryota"/>
</dbReference>
<dbReference type="GeneTree" id="ENSGT00940000154499"/>
<dbReference type="InParanoid" id="Q4KLY4"/>
<dbReference type="Reactome" id="R-RNO-2559580">
    <property type="pathway name" value="Oxidative Stress Induced Senescence"/>
</dbReference>
<dbReference type="Reactome" id="R-RNO-3108214">
    <property type="pathway name" value="SUMOylation of DNA damage response and repair proteins"/>
</dbReference>
<dbReference type="Reactome" id="R-RNO-3899300">
    <property type="pathway name" value="SUMOylation of transcription cofactors"/>
</dbReference>
<dbReference type="Reactome" id="R-RNO-4551638">
    <property type="pathway name" value="SUMOylation of chromatin organization proteins"/>
</dbReference>
<dbReference type="Reactome" id="R-RNO-4570464">
    <property type="pathway name" value="SUMOylation of RNA binding proteins"/>
</dbReference>
<dbReference type="Reactome" id="R-RNO-8939243">
    <property type="pathway name" value="RUNX1 interacts with co-factors whose precise effect on RUNX1 targets is not known"/>
</dbReference>
<dbReference type="Reactome" id="R-RNO-8953750">
    <property type="pathway name" value="Transcriptional Regulation by E2F6"/>
</dbReference>
<dbReference type="UniPathway" id="UPA00143"/>
<dbReference type="PRO" id="PR:Q4KLY4"/>
<dbReference type="Proteomes" id="UP000002494">
    <property type="component" value="Chromosome 13"/>
</dbReference>
<dbReference type="Bgee" id="ENSRNOG00000002454">
    <property type="expression patterns" value="Expressed in thymus and 20 other cell types or tissues"/>
</dbReference>
<dbReference type="ExpressionAtlas" id="Q4KLY4">
    <property type="expression patterns" value="baseline and differential"/>
</dbReference>
<dbReference type="GO" id="GO:0005737">
    <property type="term" value="C:cytoplasm"/>
    <property type="evidence" value="ECO:0000250"/>
    <property type="project" value="UniProtKB"/>
</dbReference>
<dbReference type="GO" id="GO:0000791">
    <property type="term" value="C:euchromatin"/>
    <property type="evidence" value="ECO:0000266"/>
    <property type="project" value="RGD"/>
</dbReference>
<dbReference type="GO" id="GO:0000792">
    <property type="term" value="C:heterochromatin"/>
    <property type="evidence" value="ECO:0000266"/>
    <property type="project" value="RGD"/>
</dbReference>
<dbReference type="GO" id="GO:0071339">
    <property type="term" value="C:MLL1 complex"/>
    <property type="evidence" value="ECO:0000250"/>
    <property type="project" value="UniProtKB"/>
</dbReference>
<dbReference type="GO" id="GO:0016604">
    <property type="term" value="C:nuclear body"/>
    <property type="evidence" value="ECO:0000266"/>
    <property type="project" value="RGD"/>
</dbReference>
<dbReference type="GO" id="GO:0005634">
    <property type="term" value="C:nucleus"/>
    <property type="evidence" value="ECO:0000250"/>
    <property type="project" value="UniProtKB"/>
</dbReference>
<dbReference type="GO" id="GO:0031519">
    <property type="term" value="C:PcG protein complex"/>
    <property type="evidence" value="ECO:0000250"/>
    <property type="project" value="UniProtKB"/>
</dbReference>
<dbReference type="GO" id="GO:0035102">
    <property type="term" value="C:PRC1 complex"/>
    <property type="evidence" value="ECO:0000250"/>
    <property type="project" value="UniProtKB"/>
</dbReference>
<dbReference type="GO" id="GO:0001739">
    <property type="term" value="C:sex chromatin"/>
    <property type="evidence" value="ECO:0000266"/>
    <property type="project" value="RGD"/>
</dbReference>
<dbReference type="GO" id="GO:0000151">
    <property type="term" value="C:ubiquitin ligase complex"/>
    <property type="evidence" value="ECO:0000250"/>
    <property type="project" value="UniProtKB"/>
</dbReference>
<dbReference type="GO" id="GO:0003682">
    <property type="term" value="F:chromatin binding"/>
    <property type="evidence" value="ECO:0000266"/>
    <property type="project" value="RGD"/>
</dbReference>
<dbReference type="GO" id="GO:0140862">
    <property type="term" value="F:histone H2AK119 ubiquitin ligase activity"/>
    <property type="evidence" value="ECO:0000250"/>
    <property type="project" value="UniProtKB"/>
</dbReference>
<dbReference type="GO" id="GO:0071535">
    <property type="term" value="F:RING-like zinc finger domain binding"/>
    <property type="evidence" value="ECO:0000266"/>
    <property type="project" value="RGD"/>
</dbReference>
<dbReference type="GO" id="GO:0061630">
    <property type="term" value="F:ubiquitin protein ligase activity"/>
    <property type="evidence" value="ECO:0000250"/>
    <property type="project" value="UniProtKB"/>
</dbReference>
<dbReference type="GO" id="GO:0008270">
    <property type="term" value="F:zinc ion binding"/>
    <property type="evidence" value="ECO:0000250"/>
    <property type="project" value="UniProtKB"/>
</dbReference>
<dbReference type="GO" id="GO:0009948">
    <property type="term" value="P:anterior/posterior axis specification"/>
    <property type="evidence" value="ECO:0000266"/>
    <property type="project" value="RGD"/>
</dbReference>
<dbReference type="GO" id="GO:0006325">
    <property type="term" value="P:chromatin organization"/>
    <property type="evidence" value="ECO:0000266"/>
    <property type="project" value="RGD"/>
</dbReference>
<dbReference type="GO" id="GO:0006338">
    <property type="term" value="P:chromatin remodeling"/>
    <property type="evidence" value="ECO:0000266"/>
    <property type="project" value="RGD"/>
</dbReference>
<dbReference type="GO" id="GO:0040029">
    <property type="term" value="P:epigenetic regulation of gene expression"/>
    <property type="evidence" value="ECO:0000250"/>
    <property type="project" value="UniProtKB"/>
</dbReference>
<dbReference type="GO" id="GO:0001702">
    <property type="term" value="P:gastrulation with mouth forming second"/>
    <property type="evidence" value="ECO:0000266"/>
    <property type="project" value="RGD"/>
</dbReference>
<dbReference type="GO" id="GO:0010467">
    <property type="term" value="P:gene expression"/>
    <property type="evidence" value="ECO:0000266"/>
    <property type="project" value="RGD"/>
</dbReference>
<dbReference type="GO" id="GO:0007281">
    <property type="term" value="P:germ cell development"/>
    <property type="evidence" value="ECO:0000266"/>
    <property type="project" value="RGD"/>
</dbReference>
<dbReference type="GO" id="GO:0000278">
    <property type="term" value="P:mitotic cell cycle"/>
    <property type="evidence" value="ECO:0000266"/>
    <property type="project" value="RGD"/>
</dbReference>
<dbReference type="GO" id="GO:0000122">
    <property type="term" value="P:negative regulation of transcription by RNA polymerase II"/>
    <property type="evidence" value="ECO:0000250"/>
    <property type="project" value="UniProtKB"/>
</dbReference>
<dbReference type="GO" id="GO:0016567">
    <property type="term" value="P:protein ubiquitination"/>
    <property type="evidence" value="ECO:0007669"/>
    <property type="project" value="UniProtKB-UniPathway"/>
</dbReference>
<dbReference type="GO" id="GO:0032526">
    <property type="term" value="P:response to retinoic acid"/>
    <property type="evidence" value="ECO:0000270"/>
    <property type="project" value="RGD"/>
</dbReference>
<dbReference type="GO" id="GO:0021510">
    <property type="term" value="P:spinal cord development"/>
    <property type="evidence" value="ECO:0000270"/>
    <property type="project" value="RGD"/>
</dbReference>
<dbReference type="CDD" id="cd16740">
    <property type="entry name" value="RING-HC_RING2"/>
    <property type="match status" value="1"/>
</dbReference>
<dbReference type="FunFam" id="3.30.40.10:FF:000100">
    <property type="entry name" value="E3 ubiquitin-protein ligase RING2"/>
    <property type="match status" value="1"/>
</dbReference>
<dbReference type="Gene3D" id="3.10.20.90">
    <property type="entry name" value="Phosphatidylinositol 3-kinase Catalytic Subunit, Chain A, domain 1"/>
    <property type="match status" value="1"/>
</dbReference>
<dbReference type="Gene3D" id="3.30.40.10">
    <property type="entry name" value="Zinc/RING finger domain, C3HC4 (zinc finger)"/>
    <property type="match status" value="1"/>
</dbReference>
<dbReference type="InterPro" id="IPR032443">
    <property type="entry name" value="RAWUL"/>
</dbReference>
<dbReference type="InterPro" id="IPR043540">
    <property type="entry name" value="RING1/RING2"/>
</dbReference>
<dbReference type="InterPro" id="IPR001841">
    <property type="entry name" value="Znf_RING"/>
</dbReference>
<dbReference type="InterPro" id="IPR013083">
    <property type="entry name" value="Znf_RING/FYVE/PHD"/>
</dbReference>
<dbReference type="InterPro" id="IPR017907">
    <property type="entry name" value="Znf_RING_CS"/>
</dbReference>
<dbReference type="PANTHER" id="PTHR46076">
    <property type="entry name" value="E3 UBIQUITIN-PROTEIN LIGASE RING1 / RING 2 FAMILY MEMBER"/>
    <property type="match status" value="1"/>
</dbReference>
<dbReference type="PANTHER" id="PTHR46076:SF4">
    <property type="entry name" value="E3 UBIQUITIN-PROTEIN LIGASE RING2"/>
    <property type="match status" value="1"/>
</dbReference>
<dbReference type="Pfam" id="PF16207">
    <property type="entry name" value="RAWUL"/>
    <property type="match status" value="1"/>
</dbReference>
<dbReference type="Pfam" id="PF13923">
    <property type="entry name" value="zf-C3HC4_2"/>
    <property type="match status" value="1"/>
</dbReference>
<dbReference type="SMART" id="SM00184">
    <property type="entry name" value="RING"/>
    <property type="match status" value="1"/>
</dbReference>
<dbReference type="SUPFAM" id="SSF57850">
    <property type="entry name" value="RING/U-box"/>
    <property type="match status" value="1"/>
</dbReference>
<dbReference type="PROSITE" id="PS00518">
    <property type="entry name" value="ZF_RING_1"/>
    <property type="match status" value="1"/>
</dbReference>
<dbReference type="PROSITE" id="PS50089">
    <property type="entry name" value="ZF_RING_2"/>
    <property type="match status" value="1"/>
</dbReference>
<evidence type="ECO:0000250" key="1">
    <source>
        <dbReference type="UniProtKB" id="Q99496"/>
    </source>
</evidence>
<evidence type="ECO:0000250" key="2">
    <source>
        <dbReference type="UniProtKB" id="Q9CQJ4"/>
    </source>
</evidence>
<evidence type="ECO:0000255" key="3">
    <source>
        <dbReference type="PROSITE-ProRule" id="PRU00175"/>
    </source>
</evidence>
<evidence type="ECO:0000256" key="4">
    <source>
        <dbReference type="SAM" id="MobiDB-lite"/>
    </source>
</evidence>
<evidence type="ECO:0000305" key="5"/>
<protein>
    <recommendedName>
        <fullName>E3 ubiquitin-protein ligase RING2</fullName>
        <ecNumber evidence="1">2.3.2.27</ecNumber>
    </recommendedName>
    <alternativeName>
        <fullName>RING finger protein 1B</fullName>
        <shortName>RING1b</shortName>
    </alternativeName>
    <alternativeName>
        <fullName>RING finger protein 2</fullName>
    </alternativeName>
    <alternativeName>
        <fullName evidence="5">RING-type E3 ubiquitin transferase RING2</fullName>
    </alternativeName>
</protein>
<name>RING2_RAT</name>
<feature type="initiator methionine" description="Removed" evidence="1">
    <location>
        <position position="1"/>
    </location>
</feature>
<feature type="chain" id="PRO_0000228721" description="E3 ubiquitin-protein ligase RING2">
    <location>
        <begin position="2"/>
        <end position="308"/>
    </location>
</feature>
<feature type="zinc finger region" description="RING-type" evidence="3">
    <location>
        <begin position="51"/>
        <end position="91"/>
    </location>
</feature>
<feature type="region of interest" description="Interaction with HIP2" evidence="1">
    <location>
        <begin position="2"/>
        <end position="179"/>
    </location>
</feature>
<feature type="region of interest" description="Interaction with nucleosomes via an acidic patch on histone H2A and histone H2B" evidence="1">
    <location>
        <begin position="93"/>
        <end position="98"/>
    </location>
</feature>
<feature type="region of interest" description="Disordered" evidence="4">
    <location>
        <begin position="157"/>
        <end position="206"/>
    </location>
</feature>
<feature type="compositionally biased region" description="Polar residues" evidence="4">
    <location>
        <begin position="176"/>
        <end position="191"/>
    </location>
</feature>
<feature type="modified residue" description="N-acetylserine" evidence="1">
    <location>
        <position position="2"/>
    </location>
</feature>
<feature type="modified residue" description="Phosphoserine" evidence="1">
    <location>
        <position position="41"/>
    </location>
</feature>
<feature type="modified residue" description="Phosphoserine" evidence="1">
    <location>
        <position position="143"/>
    </location>
</feature>
<feature type="modified residue" description="Phosphoserine" evidence="1">
    <location>
        <position position="168"/>
    </location>
</feature>
<feature type="cross-link" description="Glycyl lysine isopeptide (Lys-Gly) (interchain with G-Cter in ubiquitin)" evidence="2">
    <location>
        <position position="112"/>
    </location>
</feature>
<feature type="cross-link" description="Glycyl lysine isopeptide (Lys-Gly) (interchain with G-Cter in SUMO2)" evidence="1">
    <location>
        <position position="249"/>
    </location>
</feature>
<keyword id="KW-0007">Acetylation</keyword>
<keyword id="KW-0158">Chromosome</keyword>
<keyword id="KW-0963">Cytoplasm</keyword>
<keyword id="KW-1017">Isopeptide bond</keyword>
<keyword id="KW-0479">Metal-binding</keyword>
<keyword id="KW-0539">Nucleus</keyword>
<keyword id="KW-0597">Phosphoprotein</keyword>
<keyword id="KW-1185">Reference proteome</keyword>
<keyword id="KW-0678">Repressor</keyword>
<keyword id="KW-0804">Transcription</keyword>
<keyword id="KW-0805">Transcription regulation</keyword>
<keyword id="KW-0808">Transferase</keyword>
<keyword id="KW-0832">Ubl conjugation</keyword>
<keyword id="KW-0833">Ubl conjugation pathway</keyword>
<keyword id="KW-0862">Zinc</keyword>
<keyword id="KW-0863">Zinc-finger</keyword>
<reference key="1">
    <citation type="journal article" date="2004" name="Genome Res.">
        <title>The status, quality, and expansion of the NIH full-length cDNA project: the Mammalian Gene Collection (MGC).</title>
        <authorList>
            <consortium name="The MGC Project Team"/>
        </authorList>
    </citation>
    <scope>NUCLEOTIDE SEQUENCE [LARGE SCALE MRNA]</scope>
    <source>
        <tissue>Testis</tissue>
    </source>
</reference>
<sequence>MSQAVQTNGTQPLSKTWELSLYELQRTPQEAITDGLEIVVSPRSLHSELMCPICLDMLKNTMTTKECLHRFCADCIITALRSGNKECPTCRKKLVSKRSLRPDPNFDALISKIYPSRDEYEAHQERVLARINKHNNQQALSHSIEEGLKIQAMNRLQRGKKQQIENGSGAEDNGDSSHCSNASTHSNQEAGPSNKRTKTSDDSGLELDNNNAAVAIDPVMDGASEIELVFRPHPTLMEKDDSAQTRYIKTSGNATVDHLSKYLAVRLALEELRSKGESNQMNLDTASEKQYTIYIATASGQFTVSICQ</sequence>
<organism>
    <name type="scientific">Rattus norvegicus</name>
    <name type="common">Rat</name>
    <dbReference type="NCBI Taxonomy" id="10116"/>
    <lineage>
        <taxon>Eukaryota</taxon>
        <taxon>Metazoa</taxon>
        <taxon>Chordata</taxon>
        <taxon>Craniata</taxon>
        <taxon>Vertebrata</taxon>
        <taxon>Euteleostomi</taxon>
        <taxon>Mammalia</taxon>
        <taxon>Eutheria</taxon>
        <taxon>Euarchontoglires</taxon>
        <taxon>Glires</taxon>
        <taxon>Rodentia</taxon>
        <taxon>Myomorpha</taxon>
        <taxon>Muroidea</taxon>
        <taxon>Muridae</taxon>
        <taxon>Murinae</taxon>
        <taxon>Rattus</taxon>
    </lineage>
</organism>